<feature type="chain" id="PRO_0000146970" description="Glutamate decarboxylase 2">
    <location>
        <begin position="1"/>
        <end position="585"/>
    </location>
</feature>
<feature type="region of interest" description="Disordered" evidence="3">
    <location>
        <begin position="1"/>
        <end position="24"/>
    </location>
</feature>
<feature type="binding site" evidence="1">
    <location>
        <begin position="181"/>
        <end position="183"/>
    </location>
    <ligand>
        <name>substrate</name>
    </ligand>
</feature>
<feature type="binding site" evidence="1">
    <location>
        <position position="558"/>
    </location>
    <ligand>
        <name>substrate</name>
    </ligand>
</feature>
<feature type="modified residue" description="Phosphoserine" evidence="2">
    <location>
        <position position="3"/>
    </location>
</feature>
<feature type="modified residue" description="Phosphoserine" evidence="2">
    <location>
        <position position="6"/>
    </location>
</feature>
<feature type="modified residue" description="Phosphoserine" evidence="2">
    <location>
        <position position="10"/>
    </location>
</feature>
<feature type="modified residue" description="Phosphoserine" evidence="2">
    <location>
        <position position="13"/>
    </location>
</feature>
<feature type="modified residue" description="N6-(pyridoxal phosphate)lysine" evidence="1">
    <location>
        <position position="396"/>
    </location>
</feature>
<feature type="lipid moiety-binding region" description="S-palmitoyl cysteine" evidence="1">
    <location>
        <position position="30"/>
    </location>
</feature>
<feature type="lipid moiety-binding region" description="S-palmitoyl cysteine" evidence="1">
    <location>
        <position position="45"/>
    </location>
</feature>
<proteinExistence type="evidence at transcript level"/>
<comment type="function">
    <text>Catalyzes the production of GABA.</text>
</comment>
<comment type="catalytic activity">
    <reaction>
        <text>L-glutamate + H(+) = 4-aminobutanoate + CO2</text>
        <dbReference type="Rhea" id="RHEA:17785"/>
        <dbReference type="ChEBI" id="CHEBI:15378"/>
        <dbReference type="ChEBI" id="CHEBI:16526"/>
        <dbReference type="ChEBI" id="CHEBI:29985"/>
        <dbReference type="ChEBI" id="CHEBI:59888"/>
        <dbReference type="EC" id="4.1.1.15"/>
    </reaction>
</comment>
<comment type="cofactor">
    <cofactor>
        <name>pyridoxal 5'-phosphate</name>
        <dbReference type="ChEBI" id="CHEBI:597326"/>
    </cofactor>
</comment>
<comment type="subunit">
    <text evidence="1">Homodimer.</text>
</comment>
<comment type="subcellular location">
    <subcellularLocation>
        <location evidence="1">Cytoplasm</location>
        <location evidence="1">Cytosol</location>
    </subcellularLocation>
    <subcellularLocation>
        <location evidence="1">Cytoplasmic vesicle</location>
    </subcellularLocation>
    <subcellularLocation>
        <location evidence="1">Presynaptic cell membrane</location>
        <topology evidence="1">Lipid-anchor</topology>
    </subcellularLocation>
    <subcellularLocation>
        <location evidence="1">Golgi apparatus membrane</location>
        <topology evidence="1">Peripheral membrane protein</topology>
        <orientation evidence="1">Cytoplasmic side</orientation>
    </subcellularLocation>
    <text evidence="1">Associated to cytoplasmic vesicles. In neurons, cytosolic leaflet of Golgi membranes and presynaptic clusters (By similarity).</text>
</comment>
<comment type="PTM">
    <text evidence="1">Phosphorylated; which does not affect kinetic parameters or subcellular location.</text>
</comment>
<comment type="PTM">
    <text evidence="1">Palmitoylated; which is required for presynaptic clustering.</text>
</comment>
<comment type="similarity">
    <text evidence="4">Belongs to the group II decarboxylase family.</text>
</comment>
<gene>
    <name type="primary">GAD2</name>
    <name type="synonym">GAD65</name>
</gene>
<reference key="1">
    <citation type="journal article" date="1995" name="Gene">
        <title>Sequences of two porcine glutamic acid decarboxylases (65- and 67-kDa GAD).</title>
        <authorList>
            <person name="Suzuki R."/>
            <person name="Asami N."/>
            <person name="Amann E."/>
            <person name="Wagatsuma M."/>
        </authorList>
    </citation>
    <scope>NUCLEOTIDE SEQUENCE [MRNA]</scope>
    <source>
        <tissue>Brain</tissue>
    </source>
</reference>
<reference key="2">
    <citation type="submission" date="2005-03" db="EMBL/GenBank/DDBJ databases">
        <authorList>
            <person name="Yu H."/>
            <person name="Li J."/>
        </authorList>
    </citation>
    <scope>NUCLEOTIDE SEQUENCE [MRNA]</scope>
</reference>
<evidence type="ECO:0000250" key="1"/>
<evidence type="ECO:0000250" key="2">
    <source>
        <dbReference type="UniProtKB" id="Q05329"/>
    </source>
</evidence>
<evidence type="ECO:0000256" key="3">
    <source>
        <dbReference type="SAM" id="MobiDB-lite"/>
    </source>
</evidence>
<evidence type="ECO:0000305" key="4"/>
<name>DCE2_PIG</name>
<keyword id="KW-1003">Cell membrane</keyword>
<keyword id="KW-0966">Cell projection</keyword>
<keyword id="KW-0963">Cytoplasm</keyword>
<keyword id="KW-0968">Cytoplasmic vesicle</keyword>
<keyword id="KW-0210">Decarboxylase</keyword>
<keyword id="KW-0333">Golgi apparatus</keyword>
<keyword id="KW-0449">Lipoprotein</keyword>
<keyword id="KW-0456">Lyase</keyword>
<keyword id="KW-0472">Membrane</keyword>
<keyword id="KW-0530">Neurotransmitter biosynthesis</keyword>
<keyword id="KW-0564">Palmitate</keyword>
<keyword id="KW-0597">Phosphoprotein</keyword>
<keyword id="KW-0663">Pyridoxal phosphate</keyword>
<keyword id="KW-1185">Reference proteome</keyword>
<keyword id="KW-0770">Synapse</keyword>
<sequence>MASPGSGFWSFGSEDGSGDPENSGTARAWCQVAQKFTGGIGNKLCALLYGDAEKPAESGGSQPPRTTSRKATCACNQKPCNCPKAEVNYAFLHATDLLPACDGERPTLAFLQDVMDILLQYVVKSFDRSTKVIDFHYPNELLQEYNWELADQPQNLEEILMHCQTTLKYAIKTGHPRYFNQLSTGLDMVGLAADWLTSTANTNMFTYEIAPVFVLLEYVTLKKMREIIGWPGGSGDGIFSPGGAISNMYAMLIARFKMFPEVKEKGMAAVPRLIAFTSEHSHFSLKKGAAALGIGTDSVILIKCDERGKMIPSDLERRILEAKQKGFVPFLVSATAGTTVYGAFDPLLAVADICKKYKIWMHVDAAWGGGLLMSRKHKWKLSGVERANSVTWNPHKMMGVPLQCSALLVREEGLMQSCNQMHASYLFQQDKHYDLSYDTGDKALQCGRHVDVFKLWLMWRAKGTTGFEAHIDKCLELAEYLYNIIKNREGYEMVFDGKPQHTNVCFWYVPPSLRVLDNNEERMSRLSKVAPVIKARMMESGTTMVSYQPLGDKVNFFRMVISNPAATHQDIDFLIEEIERLGQDL</sequence>
<accession>P48321</accession>
<accession>Q506P9</accession>
<protein>
    <recommendedName>
        <fullName>Glutamate decarboxylase 2</fullName>
        <ecNumber>4.1.1.15</ecNumber>
    </recommendedName>
    <alternativeName>
        <fullName>65 kDa glutamic acid decarboxylase</fullName>
        <shortName>GAD-65</shortName>
    </alternativeName>
    <alternativeName>
        <fullName>Glutamate decarboxylase 65 kDa isoform</fullName>
    </alternativeName>
</protein>
<organism>
    <name type="scientific">Sus scrofa</name>
    <name type="common">Pig</name>
    <dbReference type="NCBI Taxonomy" id="9823"/>
    <lineage>
        <taxon>Eukaryota</taxon>
        <taxon>Metazoa</taxon>
        <taxon>Chordata</taxon>
        <taxon>Craniata</taxon>
        <taxon>Vertebrata</taxon>
        <taxon>Euteleostomi</taxon>
        <taxon>Mammalia</taxon>
        <taxon>Eutheria</taxon>
        <taxon>Laurasiatheria</taxon>
        <taxon>Artiodactyla</taxon>
        <taxon>Suina</taxon>
        <taxon>Suidae</taxon>
        <taxon>Sus</taxon>
    </lineage>
</organism>
<dbReference type="EC" id="4.1.1.15"/>
<dbReference type="EMBL" id="D31848">
    <property type="protein sequence ID" value="BAA06635.1"/>
    <property type="molecule type" value="mRNA"/>
</dbReference>
<dbReference type="EMBL" id="AY973276">
    <property type="protein sequence ID" value="AAY28733.1"/>
    <property type="molecule type" value="mRNA"/>
</dbReference>
<dbReference type="PIR" id="JC4064">
    <property type="entry name" value="JC4064"/>
</dbReference>
<dbReference type="RefSeq" id="NP_999060.3">
    <property type="nucleotide sequence ID" value="NM_213895.3"/>
</dbReference>
<dbReference type="SMR" id="P48321"/>
<dbReference type="FunCoup" id="P48321">
    <property type="interactions" value="297"/>
</dbReference>
<dbReference type="STRING" id="9823.ENSSSCP00000011796"/>
<dbReference type="PaxDb" id="9823-ENSSSCP00000011796"/>
<dbReference type="PeptideAtlas" id="P48321"/>
<dbReference type="Ensembl" id="ENSSSCT00015104104.1">
    <property type="protein sequence ID" value="ENSSSCP00015043488.1"/>
    <property type="gene ID" value="ENSSSCG00015077047.1"/>
</dbReference>
<dbReference type="Ensembl" id="ENSSSCT00030033461.1">
    <property type="protein sequence ID" value="ENSSSCP00030015102.1"/>
    <property type="gene ID" value="ENSSSCG00030024058.1"/>
</dbReference>
<dbReference type="Ensembl" id="ENSSSCT00035101530.1">
    <property type="protein sequence ID" value="ENSSSCP00035043240.1"/>
    <property type="gene ID" value="ENSSSCG00035074556.1"/>
</dbReference>
<dbReference type="Ensembl" id="ENSSSCT00040072051.1">
    <property type="protein sequence ID" value="ENSSSCP00040030774.1"/>
    <property type="gene ID" value="ENSSSCG00040053194.1"/>
</dbReference>
<dbReference type="Ensembl" id="ENSSSCT00050014918.1">
    <property type="protein sequence ID" value="ENSSSCP00050006129.1"/>
    <property type="gene ID" value="ENSSSCG00050011048.1"/>
</dbReference>
<dbReference type="Ensembl" id="ENSSSCT00065055175.1">
    <property type="protein sequence ID" value="ENSSSCP00065023975.1"/>
    <property type="gene ID" value="ENSSSCG00065040350.1"/>
</dbReference>
<dbReference type="Ensembl" id="ENSSSCT00085006905">
    <property type="protein sequence ID" value="ENSSSCP00085005195"/>
    <property type="gene ID" value="ENSSSCG00085003679"/>
</dbReference>
<dbReference type="Ensembl" id="ENSSSCT00090007616">
    <property type="protein sequence ID" value="ENSSSCP00090004566"/>
    <property type="gene ID" value="ENSSSCG00090004348"/>
</dbReference>
<dbReference type="Ensembl" id="ENSSSCT00110041009">
    <property type="protein sequence ID" value="ENSSSCP00110028682"/>
    <property type="gene ID" value="ENSSSCG00110021211"/>
</dbReference>
<dbReference type="GeneID" id="396929"/>
<dbReference type="KEGG" id="ssc:396929"/>
<dbReference type="CTD" id="2572"/>
<dbReference type="eggNOG" id="KOG0629">
    <property type="taxonomic scope" value="Eukaryota"/>
</dbReference>
<dbReference type="HOGENOM" id="CLU_011856_0_0_1"/>
<dbReference type="InParanoid" id="P48321"/>
<dbReference type="OrthoDB" id="392571at2759"/>
<dbReference type="TreeFam" id="TF314688"/>
<dbReference type="Reactome" id="R-SSC-888568">
    <property type="pathway name" value="GABA synthesis"/>
</dbReference>
<dbReference type="Reactome" id="R-SSC-888590">
    <property type="pathway name" value="GABA synthesis, release, reuptake and degradation"/>
</dbReference>
<dbReference type="Proteomes" id="UP000008227">
    <property type="component" value="Unplaced"/>
</dbReference>
<dbReference type="Proteomes" id="UP000314985">
    <property type="component" value="Unplaced"/>
</dbReference>
<dbReference type="Proteomes" id="UP000694570">
    <property type="component" value="Unplaced"/>
</dbReference>
<dbReference type="Proteomes" id="UP000694571">
    <property type="component" value="Unplaced"/>
</dbReference>
<dbReference type="Proteomes" id="UP000694720">
    <property type="component" value="Unplaced"/>
</dbReference>
<dbReference type="Proteomes" id="UP000694722">
    <property type="component" value="Unplaced"/>
</dbReference>
<dbReference type="Proteomes" id="UP000694723">
    <property type="component" value="Unplaced"/>
</dbReference>
<dbReference type="Proteomes" id="UP000694724">
    <property type="component" value="Unplaced"/>
</dbReference>
<dbReference type="Proteomes" id="UP000694725">
    <property type="component" value="Unplaced"/>
</dbReference>
<dbReference type="Proteomes" id="UP000694726">
    <property type="component" value="Unplaced"/>
</dbReference>
<dbReference type="Proteomes" id="UP000694727">
    <property type="component" value="Unplaced"/>
</dbReference>
<dbReference type="Proteomes" id="UP000694728">
    <property type="component" value="Unplaced"/>
</dbReference>
<dbReference type="GO" id="GO:0042995">
    <property type="term" value="C:cell projection"/>
    <property type="evidence" value="ECO:0007669"/>
    <property type="project" value="UniProtKB-KW"/>
</dbReference>
<dbReference type="GO" id="GO:0005737">
    <property type="term" value="C:cytoplasm"/>
    <property type="evidence" value="ECO:0000318"/>
    <property type="project" value="GO_Central"/>
</dbReference>
<dbReference type="GO" id="GO:0031410">
    <property type="term" value="C:cytoplasmic vesicle"/>
    <property type="evidence" value="ECO:0007669"/>
    <property type="project" value="UniProtKB-KW"/>
</dbReference>
<dbReference type="GO" id="GO:0005829">
    <property type="term" value="C:cytosol"/>
    <property type="evidence" value="ECO:0007669"/>
    <property type="project" value="UniProtKB-SubCell"/>
</dbReference>
<dbReference type="GO" id="GO:0000139">
    <property type="term" value="C:Golgi membrane"/>
    <property type="evidence" value="ECO:0007669"/>
    <property type="project" value="UniProtKB-SubCell"/>
</dbReference>
<dbReference type="GO" id="GO:0042734">
    <property type="term" value="C:presynaptic membrane"/>
    <property type="evidence" value="ECO:0007669"/>
    <property type="project" value="UniProtKB-SubCell"/>
</dbReference>
<dbReference type="GO" id="GO:0004351">
    <property type="term" value="F:glutamate decarboxylase activity"/>
    <property type="evidence" value="ECO:0000318"/>
    <property type="project" value="GO_Central"/>
</dbReference>
<dbReference type="GO" id="GO:0030170">
    <property type="term" value="F:pyridoxal phosphate binding"/>
    <property type="evidence" value="ECO:0007669"/>
    <property type="project" value="InterPro"/>
</dbReference>
<dbReference type="GO" id="GO:0006540">
    <property type="term" value="P:gamma-aminobutyrate shunt"/>
    <property type="evidence" value="ECO:0000318"/>
    <property type="project" value="GO_Central"/>
</dbReference>
<dbReference type="GO" id="GO:0009449">
    <property type="term" value="P:gamma-aminobutyric acid biosynthetic process"/>
    <property type="evidence" value="ECO:0000318"/>
    <property type="project" value="GO_Central"/>
</dbReference>
<dbReference type="CDD" id="cd06450">
    <property type="entry name" value="DOPA_deC_like"/>
    <property type="match status" value="1"/>
</dbReference>
<dbReference type="FunFam" id="3.40.640.10:FF:000016">
    <property type="entry name" value="Glutamate decarboxylase like 1"/>
    <property type="match status" value="1"/>
</dbReference>
<dbReference type="Gene3D" id="3.90.1150.170">
    <property type="match status" value="1"/>
</dbReference>
<dbReference type="Gene3D" id="3.40.640.10">
    <property type="entry name" value="Type I PLP-dependent aspartate aminotransferase-like (Major domain)"/>
    <property type="match status" value="1"/>
</dbReference>
<dbReference type="InterPro" id="IPR002129">
    <property type="entry name" value="PyrdxlP-dep_de-COase"/>
</dbReference>
<dbReference type="InterPro" id="IPR015424">
    <property type="entry name" value="PyrdxlP-dep_Trfase"/>
</dbReference>
<dbReference type="InterPro" id="IPR015421">
    <property type="entry name" value="PyrdxlP-dep_Trfase_major"/>
</dbReference>
<dbReference type="InterPro" id="IPR021115">
    <property type="entry name" value="Pyridoxal-P_BS"/>
</dbReference>
<dbReference type="PANTHER" id="PTHR45677:SF11">
    <property type="entry name" value="GLUTAMATE DECARBOXYLASE 2"/>
    <property type="match status" value="1"/>
</dbReference>
<dbReference type="PANTHER" id="PTHR45677">
    <property type="entry name" value="GLUTAMATE DECARBOXYLASE-RELATED"/>
    <property type="match status" value="1"/>
</dbReference>
<dbReference type="Pfam" id="PF00282">
    <property type="entry name" value="Pyridoxal_deC"/>
    <property type="match status" value="1"/>
</dbReference>
<dbReference type="SUPFAM" id="SSF53383">
    <property type="entry name" value="PLP-dependent transferases"/>
    <property type="match status" value="1"/>
</dbReference>
<dbReference type="PROSITE" id="PS00392">
    <property type="entry name" value="DDC_GAD_HDC_YDC"/>
    <property type="match status" value="1"/>
</dbReference>